<sequence length="123" mass="14356">MTTLANLTQTLEDAFKKVFITYMDSWRRNTTAEQQALQARVDAENFYYVILYLMVMIGMFAFIVVAILVSTVKSKRREHSQDPYHQYIVEDWQQKYRSQILHLEDSKATIHENLGATGFTVSP</sequence>
<keyword id="KW-1003">Cell membrane</keyword>
<keyword id="KW-0325">Glycoprotein</keyword>
<keyword id="KW-0407">Ion channel</keyword>
<keyword id="KW-0406">Ion transport</keyword>
<keyword id="KW-0472">Membrane</keyword>
<keyword id="KW-0630">Potassium</keyword>
<keyword id="KW-0631">Potassium channel</keyword>
<keyword id="KW-0633">Potassium transport</keyword>
<keyword id="KW-1185">Reference proteome</keyword>
<keyword id="KW-0812">Transmembrane</keyword>
<keyword id="KW-1133">Transmembrane helix</keyword>
<keyword id="KW-0813">Transport</keyword>
<keyword id="KW-0851">Voltage-gated channel</keyword>
<proteinExistence type="evidence at transcript level"/>
<name>KCNE2_CAVPO</name>
<dbReference type="EMBL" id="AY050513">
    <property type="protein sequence ID" value="AAL13163.1"/>
    <property type="molecule type" value="mRNA"/>
</dbReference>
<dbReference type="SMR" id="P63160"/>
<dbReference type="FunCoup" id="P63160">
    <property type="interactions" value="190"/>
</dbReference>
<dbReference type="STRING" id="10141.ENSCPOP00000022397"/>
<dbReference type="GlyCosmos" id="P63160">
    <property type="glycosylation" value="2 sites, No reported glycans"/>
</dbReference>
<dbReference type="InParanoid" id="P63160"/>
<dbReference type="Proteomes" id="UP000005447">
    <property type="component" value="Unassembled WGS sequence"/>
</dbReference>
<dbReference type="GO" id="GO:0016324">
    <property type="term" value="C:apical plasma membrane"/>
    <property type="evidence" value="ECO:0007669"/>
    <property type="project" value="UniProtKB-SubCell"/>
</dbReference>
<dbReference type="GO" id="GO:0005886">
    <property type="term" value="C:plasma membrane"/>
    <property type="evidence" value="ECO:0000250"/>
    <property type="project" value="UniProtKB"/>
</dbReference>
<dbReference type="GO" id="GO:0008076">
    <property type="term" value="C:voltage-gated potassium channel complex"/>
    <property type="evidence" value="ECO:0007669"/>
    <property type="project" value="TreeGrafter"/>
</dbReference>
<dbReference type="GO" id="GO:0005251">
    <property type="term" value="F:delayed rectifier potassium channel activity"/>
    <property type="evidence" value="ECO:0007669"/>
    <property type="project" value="TreeGrafter"/>
</dbReference>
<dbReference type="GO" id="GO:0015459">
    <property type="term" value="F:potassium channel regulator activity"/>
    <property type="evidence" value="ECO:0000250"/>
    <property type="project" value="UniProtKB"/>
</dbReference>
<dbReference type="GO" id="GO:0044325">
    <property type="term" value="F:transmembrane transporter binding"/>
    <property type="evidence" value="ECO:0007669"/>
    <property type="project" value="TreeGrafter"/>
</dbReference>
<dbReference type="GO" id="GO:1902282">
    <property type="term" value="F:voltage-gated potassium channel activity involved in ventricular cardiac muscle cell action potential repolarization"/>
    <property type="evidence" value="ECO:0007669"/>
    <property type="project" value="TreeGrafter"/>
</dbReference>
<dbReference type="GO" id="GO:1902260">
    <property type="term" value="P:negative regulation of delayed rectifier potassium channel activity"/>
    <property type="evidence" value="ECO:0000250"/>
    <property type="project" value="UniProtKB"/>
</dbReference>
<dbReference type="GO" id="GO:0097623">
    <property type="term" value="P:potassium ion export across plasma membrane"/>
    <property type="evidence" value="ECO:0007669"/>
    <property type="project" value="TreeGrafter"/>
</dbReference>
<dbReference type="GO" id="GO:0086091">
    <property type="term" value="P:regulation of heart rate by cardiac conduction"/>
    <property type="evidence" value="ECO:0007669"/>
    <property type="project" value="TreeGrafter"/>
</dbReference>
<dbReference type="GO" id="GO:0060307">
    <property type="term" value="P:regulation of ventricular cardiac muscle cell membrane repolarization"/>
    <property type="evidence" value="ECO:0007669"/>
    <property type="project" value="TreeGrafter"/>
</dbReference>
<dbReference type="InterPro" id="IPR000369">
    <property type="entry name" value="K_chnl_KCNE"/>
</dbReference>
<dbReference type="InterPro" id="IPR005425">
    <property type="entry name" value="K_chnl_volt-dep_bsu_KCNE2"/>
</dbReference>
<dbReference type="PANTHER" id="PTHR15282">
    <property type="entry name" value="POTASSIUM VOLTAGE-GATED CHANNEL SUBFAMILY E MEMBER 1, 3"/>
    <property type="match status" value="1"/>
</dbReference>
<dbReference type="PANTHER" id="PTHR15282:SF8">
    <property type="entry name" value="POTASSIUM VOLTAGE-GATED CHANNEL SUBFAMILY E MEMBER 2"/>
    <property type="match status" value="1"/>
</dbReference>
<dbReference type="Pfam" id="PF02060">
    <property type="entry name" value="ISK_Channel"/>
    <property type="match status" value="1"/>
</dbReference>
<dbReference type="PRINTS" id="PR01605">
    <property type="entry name" value="KCNE2CHANNEL"/>
</dbReference>
<feature type="chain" id="PRO_0000144284" description="Potassium voltage-gated channel subfamily E member 2">
    <location>
        <begin position="1"/>
        <end position="123"/>
    </location>
</feature>
<feature type="transmembrane region" description="Helical" evidence="4">
    <location>
        <begin position="49"/>
        <end position="69"/>
    </location>
</feature>
<feature type="topological domain" description="Cytoplasmic" evidence="4">
    <location>
        <begin position="70"/>
        <end position="123"/>
    </location>
</feature>
<feature type="glycosylation site" description="N-linked (GlcNAc...) asparagine" evidence="4">
    <location>
        <position position="6"/>
    </location>
</feature>
<feature type="glycosylation site" description="N-linked (GlcNAc...) asparagine" evidence="4">
    <location>
        <position position="29"/>
    </location>
</feature>
<evidence type="ECO:0000250" key="1">
    <source>
        <dbReference type="UniProtKB" id="P63161"/>
    </source>
</evidence>
<evidence type="ECO:0000250" key="2">
    <source>
        <dbReference type="UniProtKB" id="Q9D808"/>
    </source>
</evidence>
<evidence type="ECO:0000250" key="3">
    <source>
        <dbReference type="UniProtKB" id="Q9Y6J6"/>
    </source>
</evidence>
<evidence type="ECO:0000255" key="4"/>
<evidence type="ECO:0000305" key="5"/>
<gene>
    <name type="primary">Kcne2</name>
</gene>
<reference key="1">
    <citation type="submission" date="2001-08" db="EMBL/GenBank/DDBJ databases">
        <authorList>
            <person name="Jiang M."/>
            <person name="Zhang M."/>
            <person name="Liu J."/>
            <person name="Tseng G.-N."/>
        </authorList>
    </citation>
    <scope>NUCLEOTIDE SEQUENCE [MRNA]</scope>
    <source>
        <tissue>Heart</tissue>
    </source>
</reference>
<organism>
    <name type="scientific">Cavia porcellus</name>
    <name type="common">Guinea pig</name>
    <dbReference type="NCBI Taxonomy" id="10141"/>
    <lineage>
        <taxon>Eukaryota</taxon>
        <taxon>Metazoa</taxon>
        <taxon>Chordata</taxon>
        <taxon>Craniata</taxon>
        <taxon>Vertebrata</taxon>
        <taxon>Euteleostomi</taxon>
        <taxon>Mammalia</taxon>
        <taxon>Eutheria</taxon>
        <taxon>Euarchontoglires</taxon>
        <taxon>Glires</taxon>
        <taxon>Rodentia</taxon>
        <taxon>Hystricomorpha</taxon>
        <taxon>Caviidae</taxon>
        <taxon>Cavia</taxon>
    </lineage>
</organism>
<protein>
    <recommendedName>
        <fullName>Potassium voltage-gated channel subfamily E member 2</fullName>
    </recommendedName>
    <alternativeName>
        <fullName>MinK-related peptide 1</fullName>
    </alternativeName>
    <alternativeName>
        <fullName>Minimum potassium ion channel-related peptide 1</fullName>
    </alternativeName>
    <alternativeName>
        <fullName>Potassium channel subunit beta MiRP1</fullName>
    </alternativeName>
</protein>
<accession>P63160</accession>
<accession>Q9WTW0</accession>
<comment type="function">
    <text evidence="1 2 3">Ancillary protein that functions as a regulatory subunit of the voltage-gated potassium (Kv) channel complex composed of pore-forming and potassium-conducting alpha subunits and of regulatory beta subunits. KCNE2 beta subunit modulates the gating kinetics and enhances stability of the channel complex. Alters the gating of the delayed rectifier Kv channel containing KCNB1 alpha subunit. Associates with KCNH2/HERG alpha subunit Kv channel to form the rapidly activating component of the delayed rectifying potassium current (IKr) in heart. May associate with KCNQ2 and/or KCNQ3 alpha subunits to modulate the native M-type current (By similarity). May associate with HCN1 and HCN2 channel subunits to increase potassium current (By similarity). Forms a heterooligomer complex with KCNQ1/KVLQT1 alpha subunits which leads to currents with an apparently instantaneous activation, a rapid deactivation process and a linear current-voltage relationship and decreases the amplitude of the outward current (By similarity). KCNQ1-KCNE2 channel associates with Na(+)-coupled myo-inositol symporter in the apical membrane of choroid plexus epithelium and regulates the myo-inositol gradient between blood and cerebrospinal fluid with an impact on neuron excitability (By similarity).</text>
</comment>
<comment type="subunit">
    <text evidence="1 3">Interacts with KCNB1 (By similarity). Associates with KCNH2/ERG1 (By similarity). May associate with KCNQ2 and KCNQ3 (By similarity). Associates with HCN1 and probably HCN2 (By similarity). Heteromultimer with KCNC2. Interacts with KCNC2 (By similarity). Interacts with KCNQ1; forms a heterooligomer complex that targets to the membrane raft and leading to currents with an apparently instantaneous activation, a rapid deactivation process and a linear current-voltage relationship and decreases the amplitude of the outward current (By similarity).</text>
</comment>
<comment type="subcellular location">
    <subcellularLocation>
        <location evidence="1 3">Cell membrane</location>
        <topology evidence="1">Single-pass type I membrane protein</topology>
    </subcellularLocation>
    <subcellularLocation>
        <location evidence="2">Apical cell membrane</location>
        <topology evidence="4">Single-pass membrane protein</topology>
    </subcellularLocation>
    <text evidence="1">Colocalizes with KCNB1 at the plasma membrane.</text>
</comment>
<comment type="similarity">
    <text evidence="5">Belongs to the potassium channel KCNE family.</text>
</comment>